<sequence>MMRISMSLPKKLLNEFDEVLRDRGYQSRSKGIRDALKDYIVRYQWMNEMEGERIGIIAVIYDHHYTGVMEDLADIQHDYREYINAVMHVHMTERHCLEVIVVKGDVAKIRELTEKMMRLKGVEHVRLTSTSTEQKIEHEH</sequence>
<name>NIKR2_METTH</name>
<evidence type="ECO:0000250" key="1"/>
<evidence type="ECO:0000305" key="2"/>
<feature type="chain" id="PRO_0000139309" description="Putative nickel-responsive regulator 2">
    <location>
        <begin position="1"/>
        <end position="140"/>
    </location>
</feature>
<feature type="binding site" evidence="1">
    <location>
        <position position="77"/>
    </location>
    <ligand>
        <name>Ni(2+)</name>
        <dbReference type="ChEBI" id="CHEBI:49786"/>
    </ligand>
</feature>
<feature type="binding site" evidence="1">
    <location>
        <position position="88"/>
    </location>
    <ligand>
        <name>Ni(2+)</name>
        <dbReference type="ChEBI" id="CHEBI:49786"/>
    </ligand>
</feature>
<feature type="binding site" evidence="1">
    <location>
        <position position="90"/>
    </location>
    <ligand>
        <name>Ni(2+)</name>
        <dbReference type="ChEBI" id="CHEBI:49786"/>
    </ligand>
</feature>
<feature type="binding site" evidence="1">
    <location>
        <position position="96"/>
    </location>
    <ligand>
        <name>Ni(2+)</name>
        <dbReference type="ChEBI" id="CHEBI:49786"/>
    </ligand>
</feature>
<reference key="1">
    <citation type="journal article" date="1997" name="J. Bacteriol.">
        <title>Complete genome sequence of Methanobacterium thermoautotrophicum deltaH: functional analysis and comparative genomics.</title>
        <authorList>
            <person name="Smith D.R."/>
            <person name="Doucette-Stamm L.A."/>
            <person name="Deloughery C."/>
            <person name="Lee H.-M."/>
            <person name="Dubois J."/>
            <person name="Aldredge T."/>
            <person name="Bashirzadeh R."/>
            <person name="Blakely D."/>
            <person name="Cook R."/>
            <person name="Gilbert K."/>
            <person name="Harrison D."/>
            <person name="Hoang L."/>
            <person name="Keagle P."/>
            <person name="Lumm W."/>
            <person name="Pothier B."/>
            <person name="Qiu D."/>
            <person name="Spadafora R."/>
            <person name="Vicare R."/>
            <person name="Wang Y."/>
            <person name="Wierzbowski J."/>
            <person name="Gibson R."/>
            <person name="Jiwani N."/>
            <person name="Caruso A."/>
            <person name="Bush D."/>
            <person name="Safer H."/>
            <person name="Patwell D."/>
            <person name="Prabhakar S."/>
            <person name="McDougall S."/>
            <person name="Shimer G."/>
            <person name="Goyal A."/>
            <person name="Pietrovski S."/>
            <person name="Church G.M."/>
            <person name="Daniels C.J."/>
            <person name="Mao J.-I."/>
            <person name="Rice P."/>
            <person name="Noelling J."/>
            <person name="Reeve J.N."/>
        </authorList>
    </citation>
    <scope>NUCLEOTIDE SEQUENCE [LARGE SCALE GENOMIC DNA]</scope>
    <source>
        <strain>ATCC 29096 / DSM 1053 / JCM 10044 / NBRC 100330 / Delta H</strain>
    </source>
</reference>
<organism>
    <name type="scientific">Methanothermobacter thermautotrophicus (strain ATCC 29096 / DSM 1053 / JCM 10044 / NBRC 100330 / Delta H)</name>
    <name type="common">Methanobacterium thermoautotrophicum</name>
    <dbReference type="NCBI Taxonomy" id="187420"/>
    <lineage>
        <taxon>Archaea</taxon>
        <taxon>Methanobacteriati</taxon>
        <taxon>Methanobacteriota</taxon>
        <taxon>Methanomada group</taxon>
        <taxon>Methanobacteria</taxon>
        <taxon>Methanobacteriales</taxon>
        <taxon>Methanobacteriaceae</taxon>
        <taxon>Methanothermobacter</taxon>
    </lineage>
</organism>
<keyword id="KW-0238">DNA-binding</keyword>
<keyword id="KW-0479">Metal-binding</keyword>
<keyword id="KW-0533">Nickel</keyword>
<keyword id="KW-1185">Reference proteome</keyword>
<keyword id="KW-0804">Transcription</keyword>
<keyword id="KW-0805">Transcription regulation</keyword>
<proteinExistence type="inferred from homology"/>
<comment type="function">
    <text evidence="2">Transcriptional regulator.</text>
</comment>
<comment type="cofactor">
    <cofactor evidence="1">
        <name>Ni(2+)</name>
        <dbReference type="ChEBI" id="CHEBI:49786"/>
    </cofactor>
    <text evidence="1">Binds 1 nickel ion per subunit.</text>
</comment>
<comment type="similarity">
    <text evidence="2">Belongs to the transcriptional regulatory CopG/NikR family.</text>
</comment>
<accession>O26834</accession>
<protein>
    <recommendedName>
        <fullName>Putative nickel-responsive regulator 2</fullName>
    </recommendedName>
</protein>
<gene>
    <name type="ordered locus">MTH_739</name>
</gene>
<dbReference type="EMBL" id="AE000666">
    <property type="protein sequence ID" value="AAB85243.1"/>
    <property type="molecule type" value="Genomic_DNA"/>
</dbReference>
<dbReference type="PIR" id="G69198">
    <property type="entry name" value="G69198"/>
</dbReference>
<dbReference type="SMR" id="O26834"/>
<dbReference type="FunCoup" id="O26834">
    <property type="interactions" value="1"/>
</dbReference>
<dbReference type="STRING" id="187420.MTH_739"/>
<dbReference type="PaxDb" id="187420-MTH_739"/>
<dbReference type="EnsemblBacteria" id="AAB85243">
    <property type="protein sequence ID" value="AAB85243"/>
    <property type="gene ID" value="MTH_739"/>
</dbReference>
<dbReference type="KEGG" id="mth:MTH_739"/>
<dbReference type="PATRIC" id="fig|187420.15.peg.727"/>
<dbReference type="HOGENOM" id="CLU_113319_1_2_2"/>
<dbReference type="InParanoid" id="O26834"/>
<dbReference type="Proteomes" id="UP000005223">
    <property type="component" value="Chromosome"/>
</dbReference>
<dbReference type="GO" id="GO:0003677">
    <property type="term" value="F:DNA binding"/>
    <property type="evidence" value="ECO:0007669"/>
    <property type="project" value="UniProtKB-KW"/>
</dbReference>
<dbReference type="GO" id="GO:0003700">
    <property type="term" value="F:DNA-binding transcription factor activity"/>
    <property type="evidence" value="ECO:0007669"/>
    <property type="project" value="UniProtKB-UniRule"/>
</dbReference>
<dbReference type="GO" id="GO:0016151">
    <property type="term" value="F:nickel cation binding"/>
    <property type="evidence" value="ECO:0007669"/>
    <property type="project" value="UniProtKB-UniRule"/>
</dbReference>
<dbReference type="GO" id="GO:0010045">
    <property type="term" value="P:response to nickel cation"/>
    <property type="evidence" value="ECO:0007669"/>
    <property type="project" value="InterPro"/>
</dbReference>
<dbReference type="CDD" id="cd22231">
    <property type="entry name" value="RHH_NikR_HicB-like"/>
    <property type="match status" value="1"/>
</dbReference>
<dbReference type="Gene3D" id="3.30.70.1150">
    <property type="entry name" value="ACT-like. Chain A, domain 2"/>
    <property type="match status" value="1"/>
</dbReference>
<dbReference type="Gene3D" id="1.10.1220.10">
    <property type="entry name" value="Met repressor-like"/>
    <property type="match status" value="1"/>
</dbReference>
<dbReference type="HAMAP" id="MF_00476">
    <property type="entry name" value="NikR"/>
    <property type="match status" value="1"/>
</dbReference>
<dbReference type="InterPro" id="IPR027271">
    <property type="entry name" value="Acetolactate_synth/TF_NikR_C"/>
</dbReference>
<dbReference type="InterPro" id="IPR045865">
    <property type="entry name" value="ACT-like_dom_sf"/>
</dbReference>
<dbReference type="InterPro" id="IPR013321">
    <property type="entry name" value="Arc_rbn_hlx_hlx"/>
</dbReference>
<dbReference type="InterPro" id="IPR002145">
    <property type="entry name" value="CopG"/>
</dbReference>
<dbReference type="InterPro" id="IPR050192">
    <property type="entry name" value="CopG/NikR_regulator"/>
</dbReference>
<dbReference type="InterPro" id="IPR022988">
    <property type="entry name" value="Ni_resp_reg_NikR"/>
</dbReference>
<dbReference type="InterPro" id="IPR010985">
    <property type="entry name" value="Ribbon_hlx_hlx"/>
</dbReference>
<dbReference type="InterPro" id="IPR014864">
    <property type="entry name" value="TF_NikR_Ni-bd_C"/>
</dbReference>
<dbReference type="NCBIfam" id="NF001884">
    <property type="entry name" value="PRK00630.1"/>
    <property type="match status" value="1"/>
</dbReference>
<dbReference type="NCBIfam" id="NF002169">
    <property type="entry name" value="PRK01002.1"/>
    <property type="match status" value="1"/>
</dbReference>
<dbReference type="NCBIfam" id="NF002815">
    <property type="entry name" value="PRK02967.1"/>
    <property type="match status" value="1"/>
</dbReference>
<dbReference type="NCBIfam" id="NF003381">
    <property type="entry name" value="PRK04460.1"/>
    <property type="match status" value="1"/>
</dbReference>
<dbReference type="PANTHER" id="PTHR34719">
    <property type="entry name" value="NICKEL-RESPONSIVE REGULATOR"/>
    <property type="match status" value="1"/>
</dbReference>
<dbReference type="PANTHER" id="PTHR34719:SF2">
    <property type="entry name" value="NICKEL-RESPONSIVE REGULATOR"/>
    <property type="match status" value="1"/>
</dbReference>
<dbReference type="Pfam" id="PF08753">
    <property type="entry name" value="NikR_C"/>
    <property type="match status" value="1"/>
</dbReference>
<dbReference type="Pfam" id="PF01402">
    <property type="entry name" value="RHH_1"/>
    <property type="match status" value="1"/>
</dbReference>
<dbReference type="SUPFAM" id="SSF55021">
    <property type="entry name" value="ACT-like"/>
    <property type="match status" value="1"/>
</dbReference>
<dbReference type="SUPFAM" id="SSF47598">
    <property type="entry name" value="Ribbon-helix-helix"/>
    <property type="match status" value="1"/>
</dbReference>